<gene>
    <name evidence="1" type="primary">rnhB</name>
    <name type="ordered locus">SPJ_1076</name>
</gene>
<protein>
    <recommendedName>
        <fullName evidence="1">Ribonuclease HII</fullName>
        <shortName evidence="1">RNase HII</shortName>
        <ecNumber evidence="1">3.1.26.4</ecNumber>
    </recommendedName>
</protein>
<dbReference type="EC" id="3.1.26.4" evidence="1"/>
<dbReference type="EMBL" id="CP000919">
    <property type="protein sequence ID" value="ACO18810.1"/>
    <property type="molecule type" value="Genomic_DNA"/>
</dbReference>
<dbReference type="RefSeq" id="WP_000201099.1">
    <property type="nucleotide sequence ID" value="NC_012466.1"/>
</dbReference>
<dbReference type="SMR" id="C1CEC3"/>
<dbReference type="KEGG" id="sjj:SPJ_1076"/>
<dbReference type="HOGENOM" id="CLU_036532_2_1_9"/>
<dbReference type="Proteomes" id="UP000002206">
    <property type="component" value="Chromosome"/>
</dbReference>
<dbReference type="GO" id="GO:0005737">
    <property type="term" value="C:cytoplasm"/>
    <property type="evidence" value="ECO:0007669"/>
    <property type="project" value="UniProtKB-SubCell"/>
</dbReference>
<dbReference type="GO" id="GO:0032299">
    <property type="term" value="C:ribonuclease H2 complex"/>
    <property type="evidence" value="ECO:0007669"/>
    <property type="project" value="TreeGrafter"/>
</dbReference>
<dbReference type="GO" id="GO:0030145">
    <property type="term" value="F:manganese ion binding"/>
    <property type="evidence" value="ECO:0007669"/>
    <property type="project" value="UniProtKB-UniRule"/>
</dbReference>
<dbReference type="GO" id="GO:0003723">
    <property type="term" value="F:RNA binding"/>
    <property type="evidence" value="ECO:0007669"/>
    <property type="project" value="InterPro"/>
</dbReference>
<dbReference type="GO" id="GO:0004523">
    <property type="term" value="F:RNA-DNA hybrid ribonuclease activity"/>
    <property type="evidence" value="ECO:0007669"/>
    <property type="project" value="UniProtKB-UniRule"/>
</dbReference>
<dbReference type="GO" id="GO:0043137">
    <property type="term" value="P:DNA replication, removal of RNA primer"/>
    <property type="evidence" value="ECO:0007669"/>
    <property type="project" value="TreeGrafter"/>
</dbReference>
<dbReference type="GO" id="GO:0006298">
    <property type="term" value="P:mismatch repair"/>
    <property type="evidence" value="ECO:0007669"/>
    <property type="project" value="TreeGrafter"/>
</dbReference>
<dbReference type="CDD" id="cd07182">
    <property type="entry name" value="RNase_HII_bacteria_HII_like"/>
    <property type="match status" value="1"/>
</dbReference>
<dbReference type="FunFam" id="3.30.420.10:FF:000006">
    <property type="entry name" value="Ribonuclease HII"/>
    <property type="match status" value="1"/>
</dbReference>
<dbReference type="Gene3D" id="3.30.420.10">
    <property type="entry name" value="Ribonuclease H-like superfamily/Ribonuclease H"/>
    <property type="match status" value="1"/>
</dbReference>
<dbReference type="HAMAP" id="MF_00052_B">
    <property type="entry name" value="RNase_HII_B"/>
    <property type="match status" value="1"/>
</dbReference>
<dbReference type="InterPro" id="IPR022898">
    <property type="entry name" value="RNase_HII"/>
</dbReference>
<dbReference type="InterPro" id="IPR001352">
    <property type="entry name" value="RNase_HII/HIII"/>
</dbReference>
<dbReference type="InterPro" id="IPR024567">
    <property type="entry name" value="RNase_HII/HIII_dom"/>
</dbReference>
<dbReference type="InterPro" id="IPR012337">
    <property type="entry name" value="RNaseH-like_sf"/>
</dbReference>
<dbReference type="InterPro" id="IPR036397">
    <property type="entry name" value="RNaseH_sf"/>
</dbReference>
<dbReference type="NCBIfam" id="NF000594">
    <property type="entry name" value="PRK00015.1-1"/>
    <property type="match status" value="1"/>
</dbReference>
<dbReference type="NCBIfam" id="NF000595">
    <property type="entry name" value="PRK00015.1-3"/>
    <property type="match status" value="1"/>
</dbReference>
<dbReference type="PANTHER" id="PTHR10954">
    <property type="entry name" value="RIBONUCLEASE H2 SUBUNIT A"/>
    <property type="match status" value="1"/>
</dbReference>
<dbReference type="PANTHER" id="PTHR10954:SF18">
    <property type="entry name" value="RIBONUCLEASE HII"/>
    <property type="match status" value="1"/>
</dbReference>
<dbReference type="Pfam" id="PF01351">
    <property type="entry name" value="RNase_HII"/>
    <property type="match status" value="1"/>
</dbReference>
<dbReference type="SUPFAM" id="SSF53098">
    <property type="entry name" value="Ribonuclease H-like"/>
    <property type="match status" value="1"/>
</dbReference>
<dbReference type="PROSITE" id="PS51975">
    <property type="entry name" value="RNASE_H_2"/>
    <property type="match status" value="1"/>
</dbReference>
<accession>C1CEC3</accession>
<comment type="function">
    <text evidence="1">Endonuclease that specifically degrades the RNA of RNA-DNA hybrids.</text>
</comment>
<comment type="catalytic activity">
    <reaction evidence="1">
        <text>Endonucleolytic cleavage to 5'-phosphomonoester.</text>
        <dbReference type="EC" id="3.1.26.4"/>
    </reaction>
</comment>
<comment type="cofactor">
    <cofactor evidence="1">
        <name>Mn(2+)</name>
        <dbReference type="ChEBI" id="CHEBI:29035"/>
    </cofactor>
    <cofactor evidence="1">
        <name>Mg(2+)</name>
        <dbReference type="ChEBI" id="CHEBI:18420"/>
    </cofactor>
    <text evidence="1">Manganese or magnesium. Binds 1 divalent metal ion per monomer in the absence of substrate. May bind a second metal ion after substrate binding.</text>
</comment>
<comment type="subcellular location">
    <subcellularLocation>
        <location evidence="1">Cytoplasm</location>
    </subcellularLocation>
</comment>
<comment type="similarity">
    <text evidence="1">Belongs to the RNase HII family.</text>
</comment>
<sequence>MATIKEIKEFLVTVKELESPIFLELEKDNRSGVQKEISKRKRAIQAELDENLRLESMLSYEKELYKQGLTLIVGIDEVGRGPLAGPVVAAAVILPKNCKIKGLNDSKKIPKKKHLEIFQAVQDQALSIGIGIIDNQVIDQVNIYEATKLAMQEAISQLSPQPEHLLIDAMKLDLPISQTSIIKGDANSLSIAAASIVAKVTRDELMKEYDQQFPGYDFATNAGYGTAKHLEGLTKLGVTPIHRTSFEPVKSLVLGKKES</sequence>
<organism>
    <name type="scientific">Streptococcus pneumoniae (strain JJA)</name>
    <dbReference type="NCBI Taxonomy" id="488222"/>
    <lineage>
        <taxon>Bacteria</taxon>
        <taxon>Bacillati</taxon>
        <taxon>Bacillota</taxon>
        <taxon>Bacilli</taxon>
        <taxon>Lactobacillales</taxon>
        <taxon>Streptococcaceae</taxon>
        <taxon>Streptococcus</taxon>
    </lineage>
</organism>
<reference key="1">
    <citation type="journal article" date="2010" name="Genome Biol.">
        <title>Structure and dynamics of the pan-genome of Streptococcus pneumoniae and closely related species.</title>
        <authorList>
            <person name="Donati C."/>
            <person name="Hiller N.L."/>
            <person name="Tettelin H."/>
            <person name="Muzzi A."/>
            <person name="Croucher N.J."/>
            <person name="Angiuoli S.V."/>
            <person name="Oggioni M."/>
            <person name="Dunning Hotopp J.C."/>
            <person name="Hu F.Z."/>
            <person name="Riley D.R."/>
            <person name="Covacci A."/>
            <person name="Mitchell T.J."/>
            <person name="Bentley S.D."/>
            <person name="Kilian M."/>
            <person name="Ehrlich G.D."/>
            <person name="Rappuoli R."/>
            <person name="Moxon E.R."/>
            <person name="Masignani V."/>
        </authorList>
    </citation>
    <scope>NUCLEOTIDE SEQUENCE [LARGE SCALE GENOMIC DNA]</scope>
    <source>
        <strain>JJA</strain>
    </source>
</reference>
<name>RNH2_STRZJ</name>
<evidence type="ECO:0000255" key="1">
    <source>
        <dbReference type="HAMAP-Rule" id="MF_00052"/>
    </source>
</evidence>
<evidence type="ECO:0000255" key="2">
    <source>
        <dbReference type="PROSITE-ProRule" id="PRU01319"/>
    </source>
</evidence>
<feature type="chain" id="PRO_1000117689" description="Ribonuclease HII">
    <location>
        <begin position="1"/>
        <end position="259"/>
    </location>
</feature>
<feature type="domain" description="RNase H type-2" evidence="2">
    <location>
        <begin position="70"/>
        <end position="258"/>
    </location>
</feature>
<feature type="binding site" evidence="1">
    <location>
        <position position="76"/>
    </location>
    <ligand>
        <name>a divalent metal cation</name>
        <dbReference type="ChEBI" id="CHEBI:60240"/>
    </ligand>
</feature>
<feature type="binding site" evidence="1">
    <location>
        <position position="77"/>
    </location>
    <ligand>
        <name>a divalent metal cation</name>
        <dbReference type="ChEBI" id="CHEBI:60240"/>
    </ligand>
</feature>
<feature type="binding site" evidence="1">
    <location>
        <position position="168"/>
    </location>
    <ligand>
        <name>a divalent metal cation</name>
        <dbReference type="ChEBI" id="CHEBI:60240"/>
    </ligand>
</feature>
<proteinExistence type="inferred from homology"/>
<keyword id="KW-0963">Cytoplasm</keyword>
<keyword id="KW-0255">Endonuclease</keyword>
<keyword id="KW-0378">Hydrolase</keyword>
<keyword id="KW-0464">Manganese</keyword>
<keyword id="KW-0479">Metal-binding</keyword>
<keyword id="KW-0540">Nuclease</keyword>